<reference key="1">
    <citation type="journal article" date="2002" name="J. Bacteriol.">
        <title>Whole-genome comparison of Mycobacterium tuberculosis clinical and laboratory strains.</title>
        <authorList>
            <person name="Fleischmann R.D."/>
            <person name="Alland D."/>
            <person name="Eisen J.A."/>
            <person name="Carpenter L."/>
            <person name="White O."/>
            <person name="Peterson J.D."/>
            <person name="DeBoy R.T."/>
            <person name="Dodson R.J."/>
            <person name="Gwinn M.L."/>
            <person name="Haft D.H."/>
            <person name="Hickey E.K."/>
            <person name="Kolonay J.F."/>
            <person name="Nelson W.C."/>
            <person name="Umayam L.A."/>
            <person name="Ermolaeva M.D."/>
            <person name="Salzberg S.L."/>
            <person name="Delcher A."/>
            <person name="Utterback T.R."/>
            <person name="Weidman J.F."/>
            <person name="Khouri H.M."/>
            <person name="Gill J."/>
            <person name="Mikula A."/>
            <person name="Bishai W."/>
            <person name="Jacobs W.R. Jr."/>
            <person name="Venter J.C."/>
            <person name="Fraser C.M."/>
        </authorList>
    </citation>
    <scope>NUCLEOTIDE SEQUENCE [LARGE SCALE GENOMIC DNA]</scope>
    <source>
        <strain>CDC 1551 / Oshkosh</strain>
    </source>
</reference>
<keyword id="KW-0169">Cobalamin biosynthesis</keyword>
<keyword id="KW-0315">Glutamine amidotransferase</keyword>
<keyword id="KW-1185">Reference proteome</keyword>
<gene>
    <name type="primary">cobQ</name>
    <name type="synonym">cbiP</name>
    <name type="ordered locus">MT0268</name>
</gene>
<evidence type="ECO:0000250" key="1"/>
<evidence type="ECO:0000305" key="2"/>
<comment type="function">
    <text evidence="1">Catalyzes amidations at positions B, D, E, and G on adenosylcobyrinic A,C-diamide. NH(2) groups are provided by glutamine, and one molecule of ATP is hydrogenolyzed for each amidation (By similarity).</text>
</comment>
<comment type="pathway">
    <text>Cofactor biosynthesis; adenosylcobalamin biosynthesis.</text>
</comment>
<comment type="similarity">
    <text evidence="2">Belongs to the CobB/CobQ family. CobQ subfamily.</text>
</comment>
<dbReference type="EMBL" id="AE000516">
    <property type="protein sequence ID" value="AAK44486.1"/>
    <property type="molecule type" value="Genomic_DNA"/>
</dbReference>
<dbReference type="PIR" id="C70940">
    <property type="entry name" value="C70940"/>
</dbReference>
<dbReference type="RefSeq" id="WP_003899877.1">
    <property type="nucleotide sequence ID" value="NZ_KK341227.1"/>
</dbReference>
<dbReference type="KEGG" id="mtc:MT0268"/>
<dbReference type="PATRIC" id="fig|83331.31.peg.287"/>
<dbReference type="HOGENOM" id="CLU_019250_2_2_11"/>
<dbReference type="UniPathway" id="UPA00148"/>
<dbReference type="Proteomes" id="UP000001020">
    <property type="component" value="Chromosome"/>
</dbReference>
<dbReference type="GO" id="GO:0015420">
    <property type="term" value="F:ABC-type vitamin B12 transporter activity"/>
    <property type="evidence" value="ECO:0007669"/>
    <property type="project" value="UniProtKB-UniRule"/>
</dbReference>
<dbReference type="GO" id="GO:0003824">
    <property type="term" value="F:catalytic activity"/>
    <property type="evidence" value="ECO:0007669"/>
    <property type="project" value="InterPro"/>
</dbReference>
<dbReference type="GO" id="GO:0009236">
    <property type="term" value="P:cobalamin biosynthetic process"/>
    <property type="evidence" value="ECO:0007669"/>
    <property type="project" value="UniProtKB-UniRule"/>
</dbReference>
<dbReference type="CDD" id="cd05389">
    <property type="entry name" value="CobQ_N"/>
    <property type="match status" value="1"/>
</dbReference>
<dbReference type="CDD" id="cd01750">
    <property type="entry name" value="GATase1_CobQ"/>
    <property type="match status" value="1"/>
</dbReference>
<dbReference type="Gene3D" id="3.40.50.880">
    <property type="match status" value="1"/>
</dbReference>
<dbReference type="Gene3D" id="3.40.50.300">
    <property type="entry name" value="P-loop containing nucleotide triphosphate hydrolases"/>
    <property type="match status" value="1"/>
</dbReference>
<dbReference type="HAMAP" id="MF_00028">
    <property type="entry name" value="CobQ"/>
    <property type="match status" value="1"/>
</dbReference>
<dbReference type="InterPro" id="IPR029062">
    <property type="entry name" value="Class_I_gatase-like"/>
</dbReference>
<dbReference type="InterPro" id="IPR002586">
    <property type="entry name" value="CobQ/CobB/MinD/ParA_Nub-bd_dom"/>
</dbReference>
<dbReference type="InterPro" id="IPR033949">
    <property type="entry name" value="CobQ_GATase1"/>
</dbReference>
<dbReference type="InterPro" id="IPR047045">
    <property type="entry name" value="CobQ_N"/>
</dbReference>
<dbReference type="InterPro" id="IPR004459">
    <property type="entry name" value="CobQ_synth"/>
</dbReference>
<dbReference type="InterPro" id="IPR011698">
    <property type="entry name" value="GATase_3"/>
</dbReference>
<dbReference type="InterPro" id="IPR027417">
    <property type="entry name" value="P-loop_NTPase"/>
</dbReference>
<dbReference type="NCBIfam" id="TIGR00313">
    <property type="entry name" value="cobQ"/>
    <property type="match status" value="1"/>
</dbReference>
<dbReference type="NCBIfam" id="NF001989">
    <property type="entry name" value="PRK00784.1"/>
    <property type="match status" value="1"/>
</dbReference>
<dbReference type="PANTHER" id="PTHR21343:SF1">
    <property type="entry name" value="COBYRIC ACID SYNTHASE"/>
    <property type="match status" value="1"/>
</dbReference>
<dbReference type="PANTHER" id="PTHR21343">
    <property type="entry name" value="DETHIOBIOTIN SYNTHETASE"/>
    <property type="match status" value="1"/>
</dbReference>
<dbReference type="Pfam" id="PF01656">
    <property type="entry name" value="CbiA"/>
    <property type="match status" value="1"/>
</dbReference>
<dbReference type="Pfam" id="PF07685">
    <property type="entry name" value="GATase_3"/>
    <property type="match status" value="1"/>
</dbReference>
<dbReference type="SUPFAM" id="SSF52317">
    <property type="entry name" value="Class I glutamine amidotransferase-like"/>
    <property type="match status" value="1"/>
</dbReference>
<dbReference type="SUPFAM" id="SSF52540">
    <property type="entry name" value="P-loop containing nucleoside triphosphate hydrolases"/>
    <property type="match status" value="1"/>
</dbReference>
<dbReference type="PROSITE" id="PS51274">
    <property type="entry name" value="GATASE_COBBQ"/>
    <property type="match status" value="1"/>
</dbReference>
<accession>P9WP94</accession>
<accession>L0T2Z2</accession>
<accession>O53677</accession>
<accession>P0A532</accession>
<sequence length="494" mass="52135">MSGLLVAGTTSDAGKSAVTAGLCRALARRGVRVAPFKAQNMSNNSMVCRGPDGTGVEIGRAQWVQALAARTTPEAAMNPVLLKPASDHRSHVVLMGKPWGEVASSSWCAGRRALAEAACRAFDALAARYDVVVAEGAGSPAEINLRAGDYVNMGLARHAGLPTIVVGDIDRGGVFAAFLGTVALLAAEDQALVAGFVVNKFRGDSDLLAPGLRDLERVTGRRVYGTLPWHPDLWLDSEDALDLQGRRAAGTGARRVAVVRLPRISNFTDVDALGLEPDLDVVFASDPRALDDADLIVLPGTRATIADLAWLRARDLDRALLVHVAAGKPLLGICGGFQMLGRVIRDPYGIEGPGGQVTEVEGLGLLDVETAFSPHKVLRLPRGEGLGVPASGYEIHHGRITRGDTAEEFLGGARDGPVFGTMWHGSLEGDALREAFLRETLGLAPSGSCFLAARERRLDLLGDLVERHLDVDALLNLARHGCPPTLPFLAPGAP</sequence>
<proteinExistence type="inferred from homology"/>
<feature type="chain" id="PRO_0000426991" description="Cobyric acid synthase">
    <location>
        <begin position="1"/>
        <end position="494"/>
    </location>
</feature>
<feature type="domain" description="GATase cobBQ-type">
    <location>
        <begin position="253"/>
        <end position="432"/>
    </location>
</feature>
<feature type="active site" description="Nucleophile" evidence="1">
    <location>
        <position position="334"/>
    </location>
</feature>
<feature type="active site" evidence="1">
    <location>
        <position position="424"/>
    </location>
</feature>
<organism>
    <name type="scientific">Mycobacterium tuberculosis (strain CDC 1551 / Oshkosh)</name>
    <dbReference type="NCBI Taxonomy" id="83331"/>
    <lineage>
        <taxon>Bacteria</taxon>
        <taxon>Bacillati</taxon>
        <taxon>Actinomycetota</taxon>
        <taxon>Actinomycetes</taxon>
        <taxon>Mycobacteriales</taxon>
        <taxon>Mycobacteriaceae</taxon>
        <taxon>Mycobacterium</taxon>
        <taxon>Mycobacterium tuberculosis complex</taxon>
    </lineage>
</organism>
<protein>
    <recommendedName>
        <fullName>Cobyric acid synthase</fullName>
    </recommendedName>
</protein>
<name>COBQ_MYCTO</name>